<dbReference type="EC" id="2.7.-.-" evidence="1"/>
<dbReference type="EMBL" id="CU928160">
    <property type="protein sequence ID" value="CAR00811.1"/>
    <property type="molecule type" value="Genomic_DNA"/>
</dbReference>
<dbReference type="RefSeq" id="WP_000187530.1">
    <property type="nucleotide sequence ID" value="NC_011741.1"/>
</dbReference>
<dbReference type="SMR" id="B7M640"/>
<dbReference type="GeneID" id="75204829"/>
<dbReference type="KEGG" id="ecr:ECIAI1_4030"/>
<dbReference type="HOGENOM" id="CLU_006533_0_0_6"/>
<dbReference type="UniPathway" id="UPA00232"/>
<dbReference type="GO" id="GO:0005886">
    <property type="term" value="C:plasma membrane"/>
    <property type="evidence" value="ECO:0007669"/>
    <property type="project" value="UniProtKB-SubCell"/>
</dbReference>
<dbReference type="GO" id="GO:0005524">
    <property type="term" value="F:ATP binding"/>
    <property type="evidence" value="ECO:0007669"/>
    <property type="project" value="UniProtKB-KW"/>
</dbReference>
<dbReference type="GO" id="GO:0004672">
    <property type="term" value="F:protein kinase activity"/>
    <property type="evidence" value="ECO:0007669"/>
    <property type="project" value="UniProtKB-UniRule"/>
</dbReference>
<dbReference type="GO" id="GO:0010795">
    <property type="term" value="P:regulation of ubiquinone biosynthetic process"/>
    <property type="evidence" value="ECO:0007669"/>
    <property type="project" value="UniProtKB-UniRule"/>
</dbReference>
<dbReference type="GO" id="GO:0006744">
    <property type="term" value="P:ubiquinone biosynthetic process"/>
    <property type="evidence" value="ECO:0007669"/>
    <property type="project" value="UniProtKB-UniPathway"/>
</dbReference>
<dbReference type="CDD" id="cd13972">
    <property type="entry name" value="UbiB"/>
    <property type="match status" value="1"/>
</dbReference>
<dbReference type="HAMAP" id="MF_00414">
    <property type="entry name" value="UbiB"/>
    <property type="match status" value="1"/>
</dbReference>
<dbReference type="InterPro" id="IPR004147">
    <property type="entry name" value="ABC1_dom"/>
</dbReference>
<dbReference type="InterPro" id="IPR011009">
    <property type="entry name" value="Kinase-like_dom_sf"/>
</dbReference>
<dbReference type="InterPro" id="IPR010232">
    <property type="entry name" value="UbiB"/>
</dbReference>
<dbReference type="InterPro" id="IPR045308">
    <property type="entry name" value="UbiB_bact"/>
</dbReference>
<dbReference type="InterPro" id="IPR050154">
    <property type="entry name" value="UbiB_kinase"/>
</dbReference>
<dbReference type="NCBIfam" id="NF003404">
    <property type="entry name" value="PRK04750.1"/>
    <property type="match status" value="1"/>
</dbReference>
<dbReference type="NCBIfam" id="TIGR01982">
    <property type="entry name" value="UbiB"/>
    <property type="match status" value="1"/>
</dbReference>
<dbReference type="PANTHER" id="PTHR10566">
    <property type="entry name" value="CHAPERONE-ACTIVITY OF BC1 COMPLEX CABC1 -RELATED"/>
    <property type="match status" value="1"/>
</dbReference>
<dbReference type="PANTHER" id="PTHR10566:SF113">
    <property type="entry name" value="PROTEIN ACTIVITY OF BC1 COMPLEX KINASE 7, CHLOROPLASTIC"/>
    <property type="match status" value="1"/>
</dbReference>
<dbReference type="Pfam" id="PF03109">
    <property type="entry name" value="ABC1"/>
    <property type="match status" value="1"/>
</dbReference>
<dbReference type="SUPFAM" id="SSF56112">
    <property type="entry name" value="Protein kinase-like (PK-like)"/>
    <property type="match status" value="1"/>
</dbReference>
<proteinExistence type="inferred from homology"/>
<name>UBIB_ECO8A</name>
<gene>
    <name evidence="1" type="primary">ubiB</name>
    <name type="ordered locus">ECIAI1_4030</name>
</gene>
<comment type="function">
    <text evidence="1">Is probably a protein kinase regulator of UbiI activity which is involved in aerobic coenzyme Q (ubiquinone) biosynthesis.</text>
</comment>
<comment type="pathway">
    <text>Cofactor biosynthesis; ubiquinone biosynthesis [regulation].</text>
</comment>
<comment type="subcellular location">
    <subcellularLocation>
        <location evidence="1">Cell inner membrane</location>
        <topology evidence="1">Multi-pass membrane protein</topology>
    </subcellularLocation>
</comment>
<comment type="similarity">
    <text evidence="1">Belongs to the ABC1 family. UbiB subfamily.</text>
</comment>
<reference key="1">
    <citation type="journal article" date="2009" name="PLoS Genet.">
        <title>Organised genome dynamics in the Escherichia coli species results in highly diverse adaptive paths.</title>
        <authorList>
            <person name="Touchon M."/>
            <person name="Hoede C."/>
            <person name="Tenaillon O."/>
            <person name="Barbe V."/>
            <person name="Baeriswyl S."/>
            <person name="Bidet P."/>
            <person name="Bingen E."/>
            <person name="Bonacorsi S."/>
            <person name="Bouchier C."/>
            <person name="Bouvet O."/>
            <person name="Calteau A."/>
            <person name="Chiapello H."/>
            <person name="Clermont O."/>
            <person name="Cruveiller S."/>
            <person name="Danchin A."/>
            <person name="Diard M."/>
            <person name="Dossat C."/>
            <person name="Karoui M.E."/>
            <person name="Frapy E."/>
            <person name="Garry L."/>
            <person name="Ghigo J.M."/>
            <person name="Gilles A.M."/>
            <person name="Johnson J."/>
            <person name="Le Bouguenec C."/>
            <person name="Lescat M."/>
            <person name="Mangenot S."/>
            <person name="Martinez-Jehanne V."/>
            <person name="Matic I."/>
            <person name="Nassif X."/>
            <person name="Oztas S."/>
            <person name="Petit M.A."/>
            <person name="Pichon C."/>
            <person name="Rouy Z."/>
            <person name="Ruf C.S."/>
            <person name="Schneider D."/>
            <person name="Tourret J."/>
            <person name="Vacherie B."/>
            <person name="Vallenet D."/>
            <person name="Medigue C."/>
            <person name="Rocha E.P.C."/>
            <person name="Denamur E."/>
        </authorList>
    </citation>
    <scope>NUCLEOTIDE SEQUENCE [LARGE SCALE GENOMIC DNA]</scope>
    <source>
        <strain>IAI1</strain>
    </source>
</reference>
<protein>
    <recommendedName>
        <fullName evidence="1">Probable protein kinase UbiB</fullName>
        <ecNumber evidence="1">2.7.-.-</ecNumber>
    </recommendedName>
    <alternativeName>
        <fullName evidence="1">Ubiquinone biosynthesis protein UbiB</fullName>
    </alternativeName>
</protein>
<sequence length="546" mass="63203">MTPGEVRRLYFIIRTFLSYGLDELIPKMRITLPLRLWRYSLFWMPNRHKDKLLGERLRLALQELGPVWIKFGQMLSTRRDLFPPHIADQLALLQDKVAPFDGKLAKQQIEAAMGGLPVEAWFDDFEIKPLASASIAQVHTARLKSNGKEVVIKVIRPDILPVIKADLKLIYRLARWVPRLLPDGRRLRPTEVVREYEKTLIDELNLLRESANAIQLRRNFEDSPMLYIPEVYPDYCSEGMMVMERIYGIPVSDVAALEKNGTNMKLLAERGVQVFFTQVFRDSFFHADMHPGNIFVSYEHPENPKYIGIDCGIVGSLNKEDKRYLAENFIAFFNRDYRKVAELHVDSGWVPPDTNVEEFEFAIRTVCEPIFEKPLAEISFGHVLLNLFNTARRFNMEVQPQLVLLQKTLLYVEGVGRQLYPQLDLWKTAKPFLESWIKDQVGIPALVRAFKEKAPFWVEKMPELPELVYDSLRQGKYLQHSVDKIARELQSNHVRQGQSRYFLGIGATLVLSGTFLLVSRPEWGLMPGWLMAGGLIAWFVGWRKTR</sequence>
<organism>
    <name type="scientific">Escherichia coli O8 (strain IAI1)</name>
    <dbReference type="NCBI Taxonomy" id="585034"/>
    <lineage>
        <taxon>Bacteria</taxon>
        <taxon>Pseudomonadati</taxon>
        <taxon>Pseudomonadota</taxon>
        <taxon>Gammaproteobacteria</taxon>
        <taxon>Enterobacterales</taxon>
        <taxon>Enterobacteriaceae</taxon>
        <taxon>Escherichia</taxon>
    </lineage>
</organism>
<evidence type="ECO:0000255" key="1">
    <source>
        <dbReference type="HAMAP-Rule" id="MF_00414"/>
    </source>
</evidence>
<feature type="chain" id="PRO_1000123905" description="Probable protein kinase UbiB">
    <location>
        <begin position="1"/>
        <end position="546"/>
    </location>
</feature>
<feature type="transmembrane region" description="Helical" evidence="1">
    <location>
        <begin position="501"/>
        <end position="521"/>
    </location>
</feature>
<feature type="transmembrane region" description="Helical" evidence="1">
    <location>
        <begin position="522"/>
        <end position="542"/>
    </location>
</feature>
<feature type="domain" description="Protein kinase" evidence="1">
    <location>
        <begin position="124"/>
        <end position="502"/>
    </location>
</feature>
<feature type="active site" description="Proton acceptor" evidence="1">
    <location>
        <position position="288"/>
    </location>
</feature>
<feature type="binding site" evidence="1">
    <location>
        <begin position="130"/>
        <end position="138"/>
    </location>
    <ligand>
        <name>ATP</name>
        <dbReference type="ChEBI" id="CHEBI:30616"/>
    </ligand>
</feature>
<feature type="binding site" evidence="1">
    <location>
        <position position="153"/>
    </location>
    <ligand>
        <name>ATP</name>
        <dbReference type="ChEBI" id="CHEBI:30616"/>
    </ligand>
</feature>
<keyword id="KW-0067">ATP-binding</keyword>
<keyword id="KW-0997">Cell inner membrane</keyword>
<keyword id="KW-1003">Cell membrane</keyword>
<keyword id="KW-0418">Kinase</keyword>
<keyword id="KW-0472">Membrane</keyword>
<keyword id="KW-0547">Nucleotide-binding</keyword>
<keyword id="KW-0808">Transferase</keyword>
<keyword id="KW-0812">Transmembrane</keyword>
<keyword id="KW-1133">Transmembrane helix</keyword>
<keyword id="KW-0831">Ubiquinone biosynthesis</keyword>
<accession>B7M640</accession>